<comment type="function">
    <text evidence="1">Functions in complex with FlhC as a master transcriptional regulator that regulates transcription of several flagellar and non-flagellar operons by binding to their promoter region. Activates expression of class 2 flagellar genes, including fliA, which is a flagellum-specific sigma factor that turns on the class 3 genes. Also regulates genes whose products function in a variety of physiological pathways.</text>
</comment>
<comment type="subunit">
    <text evidence="1">Homodimer; disulfide-linked. Forms a heterohexamer composed of two FlhC and four FlhD subunits. Each FlhC binds a FlhD dimer, forming a heterotrimer, and a hexamer assembles by dimerization of two heterotrimers.</text>
</comment>
<comment type="subcellular location">
    <subcellularLocation>
        <location evidence="1">Cytoplasm</location>
    </subcellularLocation>
</comment>
<comment type="domain">
    <text evidence="1">The C-terminal region contains a putative helix-turn-helix (HTH) motif, suggesting that this region may bind DNA.</text>
</comment>
<comment type="similarity">
    <text evidence="1">Belongs to the FlhD family.</text>
</comment>
<accession>Q46PI5</accession>
<evidence type="ECO:0000255" key="1">
    <source>
        <dbReference type="HAMAP-Rule" id="MF_00725"/>
    </source>
</evidence>
<protein>
    <recommendedName>
        <fullName evidence="1">Flagellar transcriptional regulator FlhD</fullName>
    </recommendedName>
</protein>
<organism>
    <name type="scientific">Cupriavidus pinatubonensis (strain JMP 134 / LMG 1197)</name>
    <name type="common">Cupriavidus necator (strain JMP 134)</name>
    <dbReference type="NCBI Taxonomy" id="264198"/>
    <lineage>
        <taxon>Bacteria</taxon>
        <taxon>Pseudomonadati</taxon>
        <taxon>Pseudomonadota</taxon>
        <taxon>Betaproteobacteria</taxon>
        <taxon>Burkholderiales</taxon>
        <taxon>Burkholderiaceae</taxon>
        <taxon>Cupriavidus</taxon>
    </lineage>
</organism>
<feature type="chain" id="PRO_1000045886" description="Flagellar transcriptional regulator FlhD">
    <location>
        <begin position="1"/>
        <end position="105"/>
    </location>
</feature>
<feature type="disulfide bond" description="Interchain" evidence="1">
    <location>
        <position position="65"/>
    </location>
</feature>
<gene>
    <name evidence="1" type="primary">flhD</name>
    <name type="ordered locus">Reut_B5604</name>
</gene>
<dbReference type="EMBL" id="CP000091">
    <property type="protein sequence ID" value="AAZ64949.1"/>
    <property type="molecule type" value="Genomic_DNA"/>
</dbReference>
<dbReference type="SMR" id="Q46PI5"/>
<dbReference type="STRING" id="264198.Reut_B5604"/>
<dbReference type="KEGG" id="reu:Reut_B5604"/>
<dbReference type="eggNOG" id="ENOG5031P80">
    <property type="taxonomic scope" value="Bacteria"/>
</dbReference>
<dbReference type="HOGENOM" id="CLU_144160_1_0_4"/>
<dbReference type="OrthoDB" id="5298036at2"/>
<dbReference type="GO" id="GO:0005737">
    <property type="term" value="C:cytoplasm"/>
    <property type="evidence" value="ECO:0007669"/>
    <property type="project" value="UniProtKB-SubCell"/>
</dbReference>
<dbReference type="GO" id="GO:0003677">
    <property type="term" value="F:DNA binding"/>
    <property type="evidence" value="ECO:0007669"/>
    <property type="project" value="UniProtKB-UniRule"/>
</dbReference>
<dbReference type="GO" id="GO:0044780">
    <property type="term" value="P:bacterial-type flagellum assembly"/>
    <property type="evidence" value="ECO:0007669"/>
    <property type="project" value="InterPro"/>
</dbReference>
<dbReference type="GO" id="GO:0045893">
    <property type="term" value="P:positive regulation of DNA-templated transcription"/>
    <property type="evidence" value="ECO:0007669"/>
    <property type="project" value="InterPro"/>
</dbReference>
<dbReference type="GO" id="GO:1902208">
    <property type="term" value="P:regulation of bacterial-type flagellum assembly"/>
    <property type="evidence" value="ECO:0007669"/>
    <property type="project" value="UniProtKB-UniRule"/>
</dbReference>
<dbReference type="Gene3D" id="1.10.4000.10">
    <property type="entry name" value="Flagellar transcriptional activator FlhD"/>
    <property type="match status" value="1"/>
</dbReference>
<dbReference type="HAMAP" id="MF_00725">
    <property type="entry name" value="FlhD"/>
    <property type="match status" value="1"/>
</dbReference>
<dbReference type="InterPro" id="IPR023559">
    <property type="entry name" value="Flagellar_FlhD"/>
</dbReference>
<dbReference type="InterPro" id="IPR036194">
    <property type="entry name" value="FlhD_sf"/>
</dbReference>
<dbReference type="NCBIfam" id="NF002783">
    <property type="entry name" value="PRK02909.1-1"/>
    <property type="match status" value="1"/>
</dbReference>
<dbReference type="Pfam" id="PF05247">
    <property type="entry name" value="FlhD"/>
    <property type="match status" value="1"/>
</dbReference>
<dbReference type="SUPFAM" id="SSF63592">
    <property type="entry name" value="Flagellar transcriptional activator FlhD"/>
    <property type="match status" value="1"/>
</dbReference>
<proteinExistence type="inferred from homology"/>
<sequence length="105" mass="11872">MESSEVLQEIREVNLAYLLLAQRLVRENQVEAMFRLGVSKEIADILAKLTSAQLVKLAASNMVLCRFRFDDHALLSTLTHTAKNHDMQQMHAAILLARQPVESLN</sequence>
<keyword id="KW-0010">Activator</keyword>
<keyword id="KW-1005">Bacterial flagellum biogenesis</keyword>
<keyword id="KW-0963">Cytoplasm</keyword>
<keyword id="KW-1015">Disulfide bond</keyword>
<keyword id="KW-0238">DNA-binding</keyword>
<keyword id="KW-0804">Transcription</keyword>
<keyword id="KW-0805">Transcription regulation</keyword>
<name>FLHD_CUPPJ</name>
<reference key="1">
    <citation type="journal article" date="2010" name="PLoS ONE">
        <title>The complete multipartite genome sequence of Cupriavidus necator JMP134, a versatile pollutant degrader.</title>
        <authorList>
            <person name="Lykidis A."/>
            <person name="Perez-Pantoja D."/>
            <person name="Ledger T."/>
            <person name="Mavromatis K."/>
            <person name="Anderson I.J."/>
            <person name="Ivanova N.N."/>
            <person name="Hooper S.D."/>
            <person name="Lapidus A."/>
            <person name="Lucas S."/>
            <person name="Gonzalez B."/>
            <person name="Kyrpides N.C."/>
        </authorList>
    </citation>
    <scope>NUCLEOTIDE SEQUENCE [LARGE SCALE GENOMIC DNA]</scope>
    <source>
        <strain>JMP134 / LMG 1197</strain>
    </source>
</reference>